<evidence type="ECO:0000250" key="1">
    <source>
        <dbReference type="UniProtKB" id="B6HV38"/>
    </source>
</evidence>
<evidence type="ECO:0000250" key="2">
    <source>
        <dbReference type="UniProtKB" id="Q70PR7"/>
    </source>
</evidence>
<evidence type="ECO:0000269" key="3">
    <source>
    </source>
</evidence>
<evidence type="ECO:0000303" key="4">
    <source>
    </source>
</evidence>
<evidence type="ECO:0000305" key="5"/>
<evidence type="ECO:0000305" key="6">
    <source>
    </source>
</evidence>
<organism>
    <name type="scientific">Penicillium roqueforti</name>
    <dbReference type="NCBI Taxonomy" id="5082"/>
    <lineage>
        <taxon>Eukaryota</taxon>
        <taxon>Fungi</taxon>
        <taxon>Dikarya</taxon>
        <taxon>Ascomycota</taxon>
        <taxon>Pezizomycotina</taxon>
        <taxon>Eurotiomycetes</taxon>
        <taxon>Eurotiomycetidae</taxon>
        <taxon>Eurotiales</taxon>
        <taxon>Aspergillaceae</taxon>
        <taxon>Penicillium</taxon>
    </lineage>
</organism>
<feature type="chain" id="PRO_0000446497" description="Acetyltransferase adrJ">
    <location>
        <begin position="1"/>
        <end position="496"/>
    </location>
</feature>
<feature type="active site" description="Proton acceptor" evidence="2">
    <location>
        <position position="174"/>
    </location>
</feature>
<feature type="active site" description="Proton acceptor" evidence="2">
    <location>
        <position position="421"/>
    </location>
</feature>
<accession>A0A1Y0BRF4</accession>
<name>ADRJ_PENRO</name>
<comment type="function">
    <text evidence="1 3">Acetyltransferase; part of the gene cluster that mediates the biosynthesis of andrastins, meroterpenoid compounds that exhibit inhibitory activity against ras farnesyltransferase, suggesting that they could be promising leads for antitumor agents (PubMed:28529508). The first step of the pathway is the synthesis of 3,5-dimethylorsellinic acid (DMOA) by the polyketide synthase adrD via condensation of one acetyl-CoA starter unit with 3 malonyl-CoA units and 2 methylations (By similarity). DMAO is then converted to farnesyl-DMAO by the prenyltransferase adrG (By similarity). The methyltransferase adrK catalyzes the methylation of the carboxyl group of farnesyl-DMAO to farnesyl-DMAO methyl ester which is further converted to epoxyfarnesyl-DMAO methyl ester by the FAD-dependent monooxygenase adrH (By similarity). The terpene cyclase adrI then catalyzes the carbon skeletal rearrangement to generate the andrastin E, the first compound in the pathway having the andrastin scaffold, with the tetracyclic ring system (By similarity). The post-cyclization tailoring enzymes adrF, adrE, adrJ, and adrA, are involved in the conversion of andrastin E into andrastin A. The short chain dehydrogenase adrF is responsible for the oxidation of the C-3 a hydroxyl group of andrastin E to yield the corresponding ketone, andrastin D. The ketoreductase adrE stereoselectively reduces the carbonyl moiety to reverse the stereochemistry of the C-3 position to yield andrastin F. The acetyltransferase adrJ is the acetyltransferase that attaches the acetyl group to the C-3 hydroxyl group of andrastin F to yield andrastin C. Finally, the cytochrome P450 monooxygenase adrA catalyzes two sequential oxidation reactions of the C-23 methyl group, to generate the corresponding alcohol andrastin B, and aldehyde andrastin A (By similarity).</text>
</comment>
<comment type="pathway">
    <text evidence="3">Secondary metabolite biosynthesis; terpenoid biosynthesis.</text>
</comment>
<comment type="subunit">
    <text evidence="2">Monomer.</text>
</comment>
<comment type="disruption phenotype">
    <text evidence="3">Drastically reduces the production of andrastin A.</text>
</comment>
<comment type="similarity">
    <text evidence="5">Belongs to the plant acyltransferase family.</text>
</comment>
<protein>
    <recommendedName>
        <fullName evidence="4">Acetyltransferase adrJ</fullName>
        <ecNumber evidence="6">2.3.1.-</ecNumber>
    </recommendedName>
    <alternativeName>
        <fullName evidence="4">Andrastin A biosynthesis cluster protein J</fullName>
    </alternativeName>
</protein>
<reference key="1">
    <citation type="journal article" date="2017" name="Front. Microbiol.">
        <title>The biosynthetic gene cluster for andrastin A in Penicillium roqueforti.</title>
        <authorList>
            <person name="Rojas-Aedo J.F."/>
            <person name="Gil-Duran C."/>
            <person name="Del-Cid A."/>
            <person name="Valdes N."/>
            <person name="Alamos P."/>
            <person name="Vaca I."/>
            <person name="Garcia-Rico R.O."/>
            <person name="Levican G."/>
            <person name="Tello M."/>
            <person name="Chavez R."/>
        </authorList>
    </citation>
    <scope>NUCLEOTIDE SEQUENCE [GENOMIC DNA]</scope>
    <scope>IDENTIFICATION</scope>
    <scope>FUNCTION</scope>
    <scope>DISRUPTION PHENOTYPE</scope>
    <source>
        <strain>CECT 2905</strain>
    </source>
</reference>
<keyword id="KW-0012">Acyltransferase</keyword>
<keyword id="KW-0808">Transferase</keyword>
<sequence length="496" mass="55850">MGFFSSTQPPRPATVPSDEIIPLHFWNTALCMRGTVLDISLKFDDVLDTSKLRSALEELLEMKDWRQLGARLRMNPNGRLEYHIPTRFDASRPAFAMTNAQHETSIADHPLGARIPHATSTPAIFPSPDVLSPLLRSEDAPKNIDDWICSDRPQLSIHIITFSDATLITVTWLHTLTDVMGMALILNAWTALLRGNREAVPKLQGFRLDPLTELGQRTPAEKYMHFNRVFGRKEFWWFIGLNVLDRLWYRQEERRTICIPAASLRNLCQQSSSEICASRGKEEPVPFVSESDVLLGWWVRSLYSALGLRTDQTILVNNALNLRTSLHESFTSNNSAYMGNALCMSPTFLRGHQVADEPLGQIALRIRESVTEQRTPEQVEAMTALQMQTMEQTGYLALVGDPRMMLLSCSNWHKARLFDIDFSSAVLQSSGPSSLQNPQHTGKPCYVNGVQHSANSFRNVLSVIGKDAGGNWWLTGVLRTDAWTHIEKQLHKLGSS</sequence>
<gene>
    <name evidence="4" type="primary">adrJ</name>
</gene>
<dbReference type="EC" id="2.3.1.-" evidence="6"/>
<dbReference type="EMBL" id="KY349137">
    <property type="protein sequence ID" value="ART41215.1"/>
    <property type="molecule type" value="Genomic_DNA"/>
</dbReference>
<dbReference type="SMR" id="A0A1Y0BRF4"/>
<dbReference type="OMA" id="YCCRSIL"/>
<dbReference type="UniPathway" id="UPA00213"/>
<dbReference type="GO" id="GO:0016746">
    <property type="term" value="F:acyltransferase activity"/>
    <property type="evidence" value="ECO:0007669"/>
    <property type="project" value="UniProtKB-KW"/>
</dbReference>
<dbReference type="GO" id="GO:0016114">
    <property type="term" value="P:terpenoid biosynthetic process"/>
    <property type="evidence" value="ECO:0007669"/>
    <property type="project" value="UniProtKB-UniPathway"/>
</dbReference>
<dbReference type="Gene3D" id="3.30.559.10">
    <property type="entry name" value="Chloramphenicol acetyltransferase-like domain"/>
    <property type="match status" value="2"/>
</dbReference>
<dbReference type="InterPro" id="IPR023213">
    <property type="entry name" value="CAT-like_dom_sf"/>
</dbReference>
<dbReference type="InterPro" id="IPR051283">
    <property type="entry name" value="Sec_Metabolite_Acyltrans"/>
</dbReference>
<dbReference type="PANTHER" id="PTHR31896">
    <property type="entry name" value="FAMILY REGULATORY PROTEIN, PUTATIVE (AFU_ORTHOLOGUE AFUA_3G14730)-RELATED"/>
    <property type="match status" value="1"/>
</dbReference>
<dbReference type="PANTHER" id="PTHR31896:SF69">
    <property type="entry name" value="FAMILY REGULATORY PROTEIN, PUTATIVE (AFU_ORTHOLOGUE AFUA_3G14730)-RELATED"/>
    <property type="match status" value="1"/>
</dbReference>
<dbReference type="Pfam" id="PF02458">
    <property type="entry name" value="Transferase"/>
    <property type="match status" value="1"/>
</dbReference>
<proteinExistence type="inferred from homology"/>